<name>ZN736_HUMAN</name>
<feature type="chain" id="PRO_0000395343" description="Zinc finger protein 736">
    <location>
        <begin position="1"/>
        <end position="427"/>
    </location>
</feature>
<feature type="domain" description="KRAB" evidence="3">
    <location>
        <begin position="4"/>
        <end position="75"/>
    </location>
</feature>
<feature type="zinc finger region" description="C2H2-type 1; degenerate" evidence="2">
    <location>
        <begin position="145"/>
        <end position="167"/>
    </location>
</feature>
<feature type="zinc finger region" description="C2H2-type 2" evidence="2">
    <location>
        <begin position="173"/>
        <end position="195"/>
    </location>
</feature>
<feature type="zinc finger region" description="C2H2-type 3" evidence="2">
    <location>
        <begin position="201"/>
        <end position="223"/>
    </location>
</feature>
<feature type="zinc finger region" description="C2H2-type 4" evidence="2">
    <location>
        <begin position="229"/>
        <end position="251"/>
    </location>
</feature>
<feature type="zinc finger region" description="C2H2-type 5" evidence="2">
    <location>
        <begin position="257"/>
        <end position="279"/>
    </location>
</feature>
<feature type="zinc finger region" description="C2H2-type 6" evidence="2">
    <location>
        <begin position="285"/>
        <end position="307"/>
    </location>
</feature>
<feature type="zinc finger region" description="C2H2-type 7" evidence="2">
    <location>
        <begin position="313"/>
        <end position="335"/>
    </location>
</feature>
<feature type="zinc finger region" description="C2H2-type 8" evidence="2">
    <location>
        <begin position="341"/>
        <end position="363"/>
    </location>
</feature>
<feature type="zinc finger region" description="C2H2-type 9" evidence="2">
    <location>
        <begin position="369"/>
        <end position="391"/>
    </location>
</feature>
<feature type="zinc finger region" description="C2H2-type 10" evidence="2">
    <location>
        <begin position="397"/>
        <end position="419"/>
    </location>
</feature>
<feature type="sequence conflict" description="In Ref. 1; BAG63256." evidence="4" ref="1">
    <original>C</original>
    <variation>R</variation>
    <location>
        <position position="268"/>
    </location>
</feature>
<organism>
    <name type="scientific">Homo sapiens</name>
    <name type="common">Human</name>
    <dbReference type="NCBI Taxonomy" id="9606"/>
    <lineage>
        <taxon>Eukaryota</taxon>
        <taxon>Metazoa</taxon>
        <taxon>Chordata</taxon>
        <taxon>Craniata</taxon>
        <taxon>Vertebrata</taxon>
        <taxon>Euteleostomi</taxon>
        <taxon>Mammalia</taxon>
        <taxon>Eutheria</taxon>
        <taxon>Euarchontoglires</taxon>
        <taxon>Primates</taxon>
        <taxon>Haplorrhini</taxon>
        <taxon>Catarrhini</taxon>
        <taxon>Hominidae</taxon>
        <taxon>Homo</taxon>
    </lineage>
</organism>
<accession>B4DX44</accession>
<keyword id="KW-0238">DNA-binding</keyword>
<keyword id="KW-0479">Metal-binding</keyword>
<keyword id="KW-0539">Nucleus</keyword>
<keyword id="KW-1267">Proteomics identification</keyword>
<keyword id="KW-1185">Reference proteome</keyword>
<keyword id="KW-0677">Repeat</keyword>
<keyword id="KW-0804">Transcription</keyword>
<keyword id="KW-0805">Transcription regulation</keyword>
<keyword id="KW-0862">Zinc</keyword>
<keyword id="KW-0863">Zinc-finger</keyword>
<comment type="function">
    <text evidence="1">May be involved in transcriptional regulation.</text>
</comment>
<comment type="subcellular location">
    <subcellularLocation>
        <location evidence="1">Nucleus</location>
    </subcellularLocation>
</comment>
<comment type="similarity">
    <text evidence="4">Belongs to the krueppel C2H2-type zinc-finger protein family.</text>
</comment>
<reference key="1">
    <citation type="journal article" date="2004" name="Nat. Genet.">
        <title>Complete sequencing and characterization of 21,243 full-length human cDNAs.</title>
        <authorList>
            <person name="Ota T."/>
            <person name="Suzuki Y."/>
            <person name="Nishikawa T."/>
            <person name="Otsuki T."/>
            <person name="Sugiyama T."/>
            <person name="Irie R."/>
            <person name="Wakamatsu A."/>
            <person name="Hayashi K."/>
            <person name="Sato H."/>
            <person name="Nagai K."/>
            <person name="Kimura K."/>
            <person name="Makita H."/>
            <person name="Sekine M."/>
            <person name="Obayashi M."/>
            <person name="Nishi T."/>
            <person name="Shibahara T."/>
            <person name="Tanaka T."/>
            <person name="Ishii S."/>
            <person name="Yamamoto J."/>
            <person name="Saito K."/>
            <person name="Kawai Y."/>
            <person name="Isono Y."/>
            <person name="Nakamura Y."/>
            <person name="Nagahari K."/>
            <person name="Murakami K."/>
            <person name="Yasuda T."/>
            <person name="Iwayanagi T."/>
            <person name="Wagatsuma M."/>
            <person name="Shiratori A."/>
            <person name="Sudo H."/>
            <person name="Hosoiri T."/>
            <person name="Kaku Y."/>
            <person name="Kodaira H."/>
            <person name="Kondo H."/>
            <person name="Sugawara M."/>
            <person name="Takahashi M."/>
            <person name="Kanda K."/>
            <person name="Yokoi T."/>
            <person name="Furuya T."/>
            <person name="Kikkawa E."/>
            <person name="Omura Y."/>
            <person name="Abe K."/>
            <person name="Kamihara K."/>
            <person name="Katsuta N."/>
            <person name="Sato K."/>
            <person name="Tanikawa M."/>
            <person name="Yamazaki M."/>
            <person name="Ninomiya K."/>
            <person name="Ishibashi T."/>
            <person name="Yamashita H."/>
            <person name="Murakawa K."/>
            <person name="Fujimori K."/>
            <person name="Tanai H."/>
            <person name="Kimata M."/>
            <person name="Watanabe M."/>
            <person name="Hiraoka S."/>
            <person name="Chiba Y."/>
            <person name="Ishida S."/>
            <person name="Ono Y."/>
            <person name="Takiguchi S."/>
            <person name="Watanabe S."/>
            <person name="Yosida M."/>
            <person name="Hotuta T."/>
            <person name="Kusano J."/>
            <person name="Kanehori K."/>
            <person name="Takahashi-Fujii A."/>
            <person name="Hara H."/>
            <person name="Tanase T.-O."/>
            <person name="Nomura Y."/>
            <person name="Togiya S."/>
            <person name="Komai F."/>
            <person name="Hara R."/>
            <person name="Takeuchi K."/>
            <person name="Arita M."/>
            <person name="Imose N."/>
            <person name="Musashino K."/>
            <person name="Yuuki H."/>
            <person name="Oshima A."/>
            <person name="Sasaki N."/>
            <person name="Aotsuka S."/>
            <person name="Yoshikawa Y."/>
            <person name="Matsunawa H."/>
            <person name="Ichihara T."/>
            <person name="Shiohata N."/>
            <person name="Sano S."/>
            <person name="Moriya S."/>
            <person name="Momiyama H."/>
            <person name="Satoh N."/>
            <person name="Takami S."/>
            <person name="Terashima Y."/>
            <person name="Suzuki O."/>
            <person name="Nakagawa S."/>
            <person name="Senoh A."/>
            <person name="Mizoguchi H."/>
            <person name="Goto Y."/>
            <person name="Shimizu F."/>
            <person name="Wakebe H."/>
            <person name="Hishigaki H."/>
            <person name="Watanabe T."/>
            <person name="Sugiyama A."/>
            <person name="Takemoto M."/>
            <person name="Kawakami B."/>
            <person name="Yamazaki M."/>
            <person name="Watanabe K."/>
            <person name="Kumagai A."/>
            <person name="Itakura S."/>
            <person name="Fukuzumi Y."/>
            <person name="Fujimori Y."/>
            <person name="Komiyama M."/>
            <person name="Tashiro H."/>
            <person name="Tanigami A."/>
            <person name="Fujiwara T."/>
            <person name="Ono T."/>
            <person name="Yamada K."/>
            <person name="Fujii Y."/>
            <person name="Ozaki K."/>
            <person name="Hirao M."/>
            <person name="Ohmori Y."/>
            <person name="Kawabata A."/>
            <person name="Hikiji T."/>
            <person name="Kobatake N."/>
            <person name="Inagaki H."/>
            <person name="Ikema Y."/>
            <person name="Okamoto S."/>
            <person name="Okitani R."/>
            <person name="Kawakami T."/>
            <person name="Noguchi S."/>
            <person name="Itoh T."/>
            <person name="Shigeta K."/>
            <person name="Senba T."/>
            <person name="Matsumura K."/>
            <person name="Nakajima Y."/>
            <person name="Mizuno T."/>
            <person name="Morinaga M."/>
            <person name="Sasaki M."/>
            <person name="Togashi T."/>
            <person name="Oyama M."/>
            <person name="Hata H."/>
            <person name="Watanabe M."/>
            <person name="Komatsu T."/>
            <person name="Mizushima-Sugano J."/>
            <person name="Satoh T."/>
            <person name="Shirai Y."/>
            <person name="Takahashi Y."/>
            <person name="Nakagawa K."/>
            <person name="Okumura K."/>
            <person name="Nagase T."/>
            <person name="Nomura N."/>
            <person name="Kikuchi H."/>
            <person name="Masuho Y."/>
            <person name="Yamashita R."/>
            <person name="Nakai K."/>
            <person name="Yada T."/>
            <person name="Nakamura Y."/>
            <person name="Ohara O."/>
            <person name="Isogai T."/>
            <person name="Sugano S."/>
        </authorList>
    </citation>
    <scope>NUCLEOTIDE SEQUENCE [LARGE SCALE MRNA]</scope>
    <source>
        <tissue>Testis</tissue>
    </source>
</reference>
<reference key="2">
    <citation type="journal article" date="2003" name="Nature">
        <title>The DNA sequence of human chromosome 7.</title>
        <authorList>
            <person name="Hillier L.W."/>
            <person name="Fulton R.S."/>
            <person name="Fulton L.A."/>
            <person name="Graves T.A."/>
            <person name="Pepin K.H."/>
            <person name="Wagner-McPherson C."/>
            <person name="Layman D."/>
            <person name="Maas J."/>
            <person name="Jaeger S."/>
            <person name="Walker R."/>
            <person name="Wylie K."/>
            <person name="Sekhon M."/>
            <person name="Becker M.C."/>
            <person name="O'Laughlin M.D."/>
            <person name="Schaller M.E."/>
            <person name="Fewell G.A."/>
            <person name="Delehaunty K.D."/>
            <person name="Miner T.L."/>
            <person name="Nash W.E."/>
            <person name="Cordes M."/>
            <person name="Du H."/>
            <person name="Sun H."/>
            <person name="Edwards J."/>
            <person name="Bradshaw-Cordum H."/>
            <person name="Ali J."/>
            <person name="Andrews S."/>
            <person name="Isak A."/>
            <person name="Vanbrunt A."/>
            <person name="Nguyen C."/>
            <person name="Du F."/>
            <person name="Lamar B."/>
            <person name="Courtney L."/>
            <person name="Kalicki J."/>
            <person name="Ozersky P."/>
            <person name="Bielicki L."/>
            <person name="Scott K."/>
            <person name="Holmes A."/>
            <person name="Harkins R."/>
            <person name="Harris A."/>
            <person name="Strong C.M."/>
            <person name="Hou S."/>
            <person name="Tomlinson C."/>
            <person name="Dauphin-Kohlberg S."/>
            <person name="Kozlowicz-Reilly A."/>
            <person name="Leonard S."/>
            <person name="Rohlfing T."/>
            <person name="Rock S.M."/>
            <person name="Tin-Wollam A.-M."/>
            <person name="Abbott A."/>
            <person name="Minx P."/>
            <person name="Maupin R."/>
            <person name="Strowmatt C."/>
            <person name="Latreille P."/>
            <person name="Miller N."/>
            <person name="Johnson D."/>
            <person name="Murray J."/>
            <person name="Woessner J.P."/>
            <person name="Wendl M.C."/>
            <person name="Yang S.-P."/>
            <person name="Schultz B.R."/>
            <person name="Wallis J.W."/>
            <person name="Spieth J."/>
            <person name="Bieri T.A."/>
            <person name="Nelson J.O."/>
            <person name="Berkowicz N."/>
            <person name="Wohldmann P.E."/>
            <person name="Cook L.L."/>
            <person name="Hickenbotham M.T."/>
            <person name="Eldred J."/>
            <person name="Williams D."/>
            <person name="Bedell J.A."/>
            <person name="Mardis E.R."/>
            <person name="Clifton S.W."/>
            <person name="Chissoe S.L."/>
            <person name="Marra M.A."/>
            <person name="Raymond C."/>
            <person name="Haugen E."/>
            <person name="Gillett W."/>
            <person name="Zhou Y."/>
            <person name="James R."/>
            <person name="Phelps K."/>
            <person name="Iadanoto S."/>
            <person name="Bubb K."/>
            <person name="Simms E."/>
            <person name="Levy R."/>
            <person name="Clendenning J."/>
            <person name="Kaul R."/>
            <person name="Kent W.J."/>
            <person name="Furey T.S."/>
            <person name="Baertsch R.A."/>
            <person name="Brent M.R."/>
            <person name="Keibler E."/>
            <person name="Flicek P."/>
            <person name="Bork P."/>
            <person name="Suyama M."/>
            <person name="Bailey J.A."/>
            <person name="Portnoy M.E."/>
            <person name="Torrents D."/>
            <person name="Chinwalla A.T."/>
            <person name="Gish W.R."/>
            <person name="Eddy S.R."/>
            <person name="McPherson J.D."/>
            <person name="Olson M.V."/>
            <person name="Eichler E.E."/>
            <person name="Green E.D."/>
            <person name="Waterston R.H."/>
            <person name="Wilson R.K."/>
        </authorList>
    </citation>
    <scope>NUCLEOTIDE SEQUENCE [LARGE SCALE GENOMIC DNA]</scope>
</reference>
<gene>
    <name type="primary">ZNF736</name>
</gene>
<proteinExistence type="evidence at protein level"/>
<protein>
    <recommendedName>
        <fullName>Zinc finger protein 736</fullName>
    </recommendedName>
</protein>
<dbReference type="EMBL" id="AK301806">
    <property type="protein sequence ID" value="BAG63256.1"/>
    <property type="molecule type" value="mRNA"/>
</dbReference>
<dbReference type="EMBL" id="AC073270">
    <property type="status" value="NOT_ANNOTATED_CDS"/>
    <property type="molecule type" value="Genomic_DNA"/>
</dbReference>
<dbReference type="CCDS" id="CCDS55114.1"/>
<dbReference type="RefSeq" id="NP_001164376.1">
    <property type="nucleotide sequence ID" value="NM_001170905.3"/>
</dbReference>
<dbReference type="SMR" id="B4DX44"/>
<dbReference type="BioGRID" id="609336">
    <property type="interactions" value="3"/>
</dbReference>
<dbReference type="FunCoup" id="B4DX44">
    <property type="interactions" value="73"/>
</dbReference>
<dbReference type="IntAct" id="B4DX44">
    <property type="interactions" value="16"/>
</dbReference>
<dbReference type="STRING" id="9606.ENSP00000400852"/>
<dbReference type="iPTMnet" id="B4DX44"/>
<dbReference type="PhosphoSitePlus" id="B4DX44"/>
<dbReference type="BioMuta" id="ZNF736"/>
<dbReference type="jPOST" id="B4DX44"/>
<dbReference type="MassIVE" id="B4DX44"/>
<dbReference type="PaxDb" id="9606-ENSP00000400852"/>
<dbReference type="PeptideAtlas" id="B4DX44"/>
<dbReference type="ProteomicsDB" id="5408"/>
<dbReference type="Antibodypedia" id="67605">
    <property type="antibodies" value="68 antibodies from 14 providers"/>
</dbReference>
<dbReference type="DNASU" id="728927"/>
<dbReference type="Ensembl" id="ENST00000355095.8">
    <property type="protein sequence ID" value="ENSP00000347210.4"/>
    <property type="gene ID" value="ENSG00000234444.10"/>
</dbReference>
<dbReference type="Ensembl" id="ENST00000423484.3">
    <property type="protein sequence ID" value="ENSP00000400852.1"/>
    <property type="gene ID" value="ENSG00000234444.10"/>
</dbReference>
<dbReference type="GeneID" id="728927"/>
<dbReference type="KEGG" id="hsa:728927"/>
<dbReference type="MANE-Select" id="ENST00000423484.3">
    <property type="protein sequence ID" value="ENSP00000400852.1"/>
    <property type="RefSeq nucleotide sequence ID" value="NM_001170905.3"/>
    <property type="RefSeq protein sequence ID" value="NP_001164376.1"/>
</dbReference>
<dbReference type="UCSC" id="uc003tsz.5">
    <property type="organism name" value="human"/>
</dbReference>
<dbReference type="AGR" id="HGNC:32467"/>
<dbReference type="CTD" id="728927"/>
<dbReference type="GeneCards" id="ZNF736"/>
<dbReference type="HGNC" id="HGNC:32467">
    <property type="gene designation" value="ZNF736"/>
</dbReference>
<dbReference type="HPA" id="ENSG00000234444">
    <property type="expression patterns" value="Low tissue specificity"/>
</dbReference>
<dbReference type="neXtProt" id="NX_B4DX44"/>
<dbReference type="OpenTargets" id="ENSG00000234444"/>
<dbReference type="VEuPathDB" id="HostDB:ENSG00000234444"/>
<dbReference type="eggNOG" id="KOG1721">
    <property type="taxonomic scope" value="Eukaryota"/>
</dbReference>
<dbReference type="GeneTree" id="ENSGT00940000154251"/>
<dbReference type="HOGENOM" id="CLU_002678_44_0_1"/>
<dbReference type="InParanoid" id="B4DX44"/>
<dbReference type="OMA" id="GRAFQLC"/>
<dbReference type="OrthoDB" id="6077919at2759"/>
<dbReference type="PAN-GO" id="B4DX44">
    <property type="GO annotations" value="3 GO annotations based on evolutionary models"/>
</dbReference>
<dbReference type="PhylomeDB" id="B4DX44"/>
<dbReference type="TreeFam" id="TF342117"/>
<dbReference type="PathwayCommons" id="B4DX44"/>
<dbReference type="Reactome" id="R-HSA-212436">
    <property type="pathway name" value="Generic Transcription Pathway"/>
</dbReference>
<dbReference type="SignaLink" id="B4DX44"/>
<dbReference type="BioGRID-ORCS" id="728927">
    <property type="hits" value="14 hits in 1095 CRISPR screens"/>
</dbReference>
<dbReference type="ChiTaRS" id="ZNF736">
    <property type="organism name" value="human"/>
</dbReference>
<dbReference type="GenomeRNAi" id="728927"/>
<dbReference type="Pharos" id="B4DX44">
    <property type="development level" value="Tdark"/>
</dbReference>
<dbReference type="PRO" id="PR:B4DX44"/>
<dbReference type="Proteomes" id="UP000005640">
    <property type="component" value="Chromosome 7"/>
</dbReference>
<dbReference type="RNAct" id="B4DX44">
    <property type="molecule type" value="protein"/>
</dbReference>
<dbReference type="Bgee" id="ENSG00000234444">
    <property type="expression patterns" value="Expressed in epithelial cell of pancreas and 161 other cell types or tissues"/>
</dbReference>
<dbReference type="ExpressionAtlas" id="B4DX44">
    <property type="expression patterns" value="baseline and differential"/>
</dbReference>
<dbReference type="GO" id="GO:0005634">
    <property type="term" value="C:nucleus"/>
    <property type="evidence" value="ECO:0007669"/>
    <property type="project" value="UniProtKB-SubCell"/>
</dbReference>
<dbReference type="GO" id="GO:0000981">
    <property type="term" value="F:DNA-binding transcription factor activity, RNA polymerase II-specific"/>
    <property type="evidence" value="ECO:0000318"/>
    <property type="project" value="GO_Central"/>
</dbReference>
<dbReference type="GO" id="GO:0000978">
    <property type="term" value="F:RNA polymerase II cis-regulatory region sequence-specific DNA binding"/>
    <property type="evidence" value="ECO:0000318"/>
    <property type="project" value="GO_Central"/>
</dbReference>
<dbReference type="GO" id="GO:0008270">
    <property type="term" value="F:zinc ion binding"/>
    <property type="evidence" value="ECO:0007669"/>
    <property type="project" value="UniProtKB-KW"/>
</dbReference>
<dbReference type="GO" id="GO:0006355">
    <property type="term" value="P:regulation of DNA-templated transcription"/>
    <property type="evidence" value="ECO:0000318"/>
    <property type="project" value="GO_Central"/>
</dbReference>
<dbReference type="CDD" id="cd07765">
    <property type="entry name" value="KRAB_A-box"/>
    <property type="match status" value="1"/>
</dbReference>
<dbReference type="FunFam" id="3.30.160.60:FF:000446">
    <property type="entry name" value="Zinc finger protein"/>
    <property type="match status" value="1"/>
</dbReference>
<dbReference type="FunFam" id="3.30.160.60:FF:000524">
    <property type="entry name" value="Zinc finger protein 155"/>
    <property type="match status" value="2"/>
</dbReference>
<dbReference type="FunFam" id="3.30.160.60:FF:000034">
    <property type="entry name" value="zinc finger protein 25"/>
    <property type="match status" value="3"/>
</dbReference>
<dbReference type="FunFam" id="3.30.160.60:FF:000087">
    <property type="entry name" value="Zinc finger protein 354B"/>
    <property type="match status" value="2"/>
</dbReference>
<dbReference type="FunFam" id="3.30.160.60:FF:000023">
    <property type="entry name" value="zinc finger protein 37 homolog"/>
    <property type="match status" value="1"/>
</dbReference>
<dbReference type="Gene3D" id="6.10.140.140">
    <property type="match status" value="1"/>
</dbReference>
<dbReference type="Gene3D" id="3.30.160.60">
    <property type="entry name" value="Classic Zinc Finger"/>
    <property type="match status" value="9"/>
</dbReference>
<dbReference type="InterPro" id="IPR001909">
    <property type="entry name" value="KRAB"/>
</dbReference>
<dbReference type="InterPro" id="IPR036051">
    <property type="entry name" value="KRAB_dom_sf"/>
</dbReference>
<dbReference type="InterPro" id="IPR036236">
    <property type="entry name" value="Znf_C2H2_sf"/>
</dbReference>
<dbReference type="InterPro" id="IPR013087">
    <property type="entry name" value="Znf_C2H2_type"/>
</dbReference>
<dbReference type="PANTHER" id="PTHR24381">
    <property type="entry name" value="ZINC FINGER PROTEIN"/>
    <property type="match status" value="1"/>
</dbReference>
<dbReference type="PANTHER" id="PTHR24381:SF404">
    <property type="entry name" value="ZINC FINGER PROTEIN 737"/>
    <property type="match status" value="1"/>
</dbReference>
<dbReference type="Pfam" id="PF01352">
    <property type="entry name" value="KRAB"/>
    <property type="match status" value="1"/>
</dbReference>
<dbReference type="Pfam" id="PF00096">
    <property type="entry name" value="zf-C2H2"/>
    <property type="match status" value="6"/>
</dbReference>
<dbReference type="Pfam" id="PF13912">
    <property type="entry name" value="zf-C2H2_6"/>
    <property type="match status" value="1"/>
</dbReference>
<dbReference type="SMART" id="SM00349">
    <property type="entry name" value="KRAB"/>
    <property type="match status" value="1"/>
</dbReference>
<dbReference type="SMART" id="SM00355">
    <property type="entry name" value="ZnF_C2H2"/>
    <property type="match status" value="9"/>
</dbReference>
<dbReference type="SUPFAM" id="SSF57667">
    <property type="entry name" value="beta-beta-alpha zinc fingers"/>
    <property type="match status" value="6"/>
</dbReference>
<dbReference type="SUPFAM" id="SSF109640">
    <property type="entry name" value="KRAB domain (Kruppel-associated box)"/>
    <property type="match status" value="1"/>
</dbReference>
<dbReference type="PROSITE" id="PS50805">
    <property type="entry name" value="KRAB"/>
    <property type="match status" value="1"/>
</dbReference>
<dbReference type="PROSITE" id="PS00028">
    <property type="entry name" value="ZINC_FINGER_C2H2_1"/>
    <property type="match status" value="8"/>
</dbReference>
<dbReference type="PROSITE" id="PS50157">
    <property type="entry name" value="ZINC_FINGER_C2H2_2"/>
    <property type="match status" value="9"/>
</dbReference>
<evidence type="ECO:0000250" key="1"/>
<evidence type="ECO:0000255" key="2">
    <source>
        <dbReference type="PROSITE-ProRule" id="PRU00042"/>
    </source>
</evidence>
<evidence type="ECO:0000255" key="3">
    <source>
        <dbReference type="PROSITE-ProRule" id="PRU00119"/>
    </source>
</evidence>
<evidence type="ECO:0000305" key="4"/>
<sequence length="427" mass="49868">MGVLTFRDVAVEFSPEEWECLDSAQQRLYRDVMLENYGNLVSLGLAIFKPDLMTCLEQRKEPWKVKRQEAVAKHPAGSFHFTAEILPDHDIKDSFQKVILRKYGSCDLNNLHLKKDYQSVGNCKGQKSSYNGLHQCLSATHSKTCQCNKCGRGFQLCSIFTEHKDIFSREKCHKCEECGKDCRLFSDFTRHKKIHTVERCYKCEECGKAFKKFSNLTEHKRVHTGEKPYKCEGCGKTFTCSSTLVKHKRNHTGDRPYKCEECGKAFKCFSDLTNHKRIHTGEKPYKCEECNKAYRWFSDLAKHKIIHTGDKPYTCNECGKAFKWFSALSKHKRIHTGEKPYICEECGKAFTRSSTLFNHKRIHMEERPYKCEECSKTFKCFSDLTNHKRIHTGEKPYKCEECGKASSWFSHLIRHKRIHTREKLHKC</sequence>